<keyword id="KW-0143">Chaperone</keyword>
<keyword id="KW-0963">Cytoplasm</keyword>
<keyword id="KW-0346">Stress response</keyword>
<proteinExistence type="inferred from homology"/>
<comment type="function">
    <text evidence="1">Participates actively in the response to hyperosmotic and heat shock by preventing the aggregation of stress-denatured proteins, in association with DnaK and GrpE. It is the nucleotide exchange factor for DnaK and may function as a thermosensor. Unfolded proteins bind initially to DnaJ; upon interaction with the DnaJ-bound protein, DnaK hydrolyzes its bound ATP, resulting in the formation of a stable complex. GrpE releases ADP from DnaK; ATP binding to DnaK triggers the release of the substrate protein, thus completing the reaction cycle. Several rounds of ATP-dependent interactions between DnaJ, DnaK and GrpE are required for fully efficient folding.</text>
</comment>
<comment type="subunit">
    <text evidence="1">Homodimer.</text>
</comment>
<comment type="subcellular location">
    <subcellularLocation>
        <location evidence="1">Cytoplasm</location>
    </subcellularLocation>
</comment>
<comment type="similarity">
    <text evidence="1">Belongs to the GrpE family.</text>
</comment>
<feature type="chain" id="PRO_1000053616" description="Protein GrpE">
    <location>
        <begin position="1"/>
        <end position="239"/>
    </location>
</feature>
<feature type="region of interest" description="Disordered" evidence="2">
    <location>
        <begin position="1"/>
        <end position="50"/>
    </location>
</feature>
<feature type="region of interest" description="Disordered" evidence="2">
    <location>
        <begin position="209"/>
        <end position="239"/>
    </location>
</feature>
<feature type="compositionally biased region" description="Polar residues" evidence="2">
    <location>
        <begin position="16"/>
        <end position="30"/>
    </location>
</feature>
<feature type="compositionally biased region" description="Acidic residues" evidence="2">
    <location>
        <begin position="218"/>
        <end position="239"/>
    </location>
</feature>
<reference key="1">
    <citation type="journal article" date="2006" name="Science">
        <title>Genomic islands and the ecology and evolution of Prochlorococcus.</title>
        <authorList>
            <person name="Coleman M.L."/>
            <person name="Sullivan M.B."/>
            <person name="Martiny A.C."/>
            <person name="Steglich C."/>
            <person name="Barry K."/>
            <person name="Delong E.F."/>
            <person name="Chisholm S.W."/>
        </authorList>
    </citation>
    <scope>NUCLEOTIDE SEQUENCE [LARGE SCALE GENOMIC DNA]</scope>
    <source>
        <strain>MIT 9312</strain>
    </source>
</reference>
<dbReference type="EMBL" id="CP000111">
    <property type="protein sequence ID" value="ABB49077.1"/>
    <property type="molecule type" value="Genomic_DNA"/>
</dbReference>
<dbReference type="RefSeq" id="WP_011375581.1">
    <property type="nucleotide sequence ID" value="NC_007577.1"/>
</dbReference>
<dbReference type="SMR" id="Q31DG8"/>
<dbReference type="STRING" id="74546.PMT9312_0016"/>
<dbReference type="KEGG" id="pmi:PMT9312_0016"/>
<dbReference type="eggNOG" id="COG0576">
    <property type="taxonomic scope" value="Bacteria"/>
</dbReference>
<dbReference type="HOGENOM" id="CLU_057217_5_1_3"/>
<dbReference type="OrthoDB" id="9812586at2"/>
<dbReference type="Proteomes" id="UP000002715">
    <property type="component" value="Chromosome"/>
</dbReference>
<dbReference type="GO" id="GO:0005737">
    <property type="term" value="C:cytoplasm"/>
    <property type="evidence" value="ECO:0007669"/>
    <property type="project" value="UniProtKB-SubCell"/>
</dbReference>
<dbReference type="GO" id="GO:0000774">
    <property type="term" value="F:adenyl-nucleotide exchange factor activity"/>
    <property type="evidence" value="ECO:0007669"/>
    <property type="project" value="InterPro"/>
</dbReference>
<dbReference type="GO" id="GO:0042803">
    <property type="term" value="F:protein homodimerization activity"/>
    <property type="evidence" value="ECO:0007669"/>
    <property type="project" value="InterPro"/>
</dbReference>
<dbReference type="GO" id="GO:0051087">
    <property type="term" value="F:protein-folding chaperone binding"/>
    <property type="evidence" value="ECO:0007669"/>
    <property type="project" value="InterPro"/>
</dbReference>
<dbReference type="GO" id="GO:0051082">
    <property type="term" value="F:unfolded protein binding"/>
    <property type="evidence" value="ECO:0007669"/>
    <property type="project" value="TreeGrafter"/>
</dbReference>
<dbReference type="GO" id="GO:0006457">
    <property type="term" value="P:protein folding"/>
    <property type="evidence" value="ECO:0007669"/>
    <property type="project" value="InterPro"/>
</dbReference>
<dbReference type="CDD" id="cd00446">
    <property type="entry name" value="GrpE"/>
    <property type="match status" value="1"/>
</dbReference>
<dbReference type="FunFam" id="2.30.22.10:FF:000001">
    <property type="entry name" value="Protein GrpE"/>
    <property type="match status" value="1"/>
</dbReference>
<dbReference type="Gene3D" id="3.90.20.20">
    <property type="match status" value="1"/>
</dbReference>
<dbReference type="Gene3D" id="2.30.22.10">
    <property type="entry name" value="Head domain of nucleotide exchange factor GrpE"/>
    <property type="match status" value="1"/>
</dbReference>
<dbReference type="HAMAP" id="MF_01151">
    <property type="entry name" value="GrpE"/>
    <property type="match status" value="1"/>
</dbReference>
<dbReference type="InterPro" id="IPR000740">
    <property type="entry name" value="GrpE"/>
</dbReference>
<dbReference type="InterPro" id="IPR013805">
    <property type="entry name" value="GrpE_coiled_coil"/>
</dbReference>
<dbReference type="InterPro" id="IPR009012">
    <property type="entry name" value="GrpE_head"/>
</dbReference>
<dbReference type="NCBIfam" id="NF010738">
    <property type="entry name" value="PRK14140.1"/>
    <property type="match status" value="1"/>
</dbReference>
<dbReference type="NCBIfam" id="NF010741">
    <property type="entry name" value="PRK14143.1"/>
    <property type="match status" value="1"/>
</dbReference>
<dbReference type="PANTHER" id="PTHR21237">
    <property type="entry name" value="GRPE PROTEIN"/>
    <property type="match status" value="1"/>
</dbReference>
<dbReference type="PANTHER" id="PTHR21237:SF23">
    <property type="entry name" value="GRPE PROTEIN HOMOLOG, MITOCHONDRIAL"/>
    <property type="match status" value="1"/>
</dbReference>
<dbReference type="Pfam" id="PF01025">
    <property type="entry name" value="GrpE"/>
    <property type="match status" value="1"/>
</dbReference>
<dbReference type="PRINTS" id="PR00773">
    <property type="entry name" value="GRPEPROTEIN"/>
</dbReference>
<dbReference type="SUPFAM" id="SSF58014">
    <property type="entry name" value="Coiled-coil domain of nucleotide exchange factor GrpE"/>
    <property type="match status" value="1"/>
</dbReference>
<dbReference type="SUPFAM" id="SSF51064">
    <property type="entry name" value="Head domain of nucleotide exchange factor GrpE"/>
    <property type="match status" value="1"/>
</dbReference>
<dbReference type="PROSITE" id="PS01071">
    <property type="entry name" value="GRPE"/>
    <property type="match status" value="1"/>
</dbReference>
<gene>
    <name evidence="1" type="primary">grpE</name>
    <name type="ordered locus">PMT9312_0016</name>
</gene>
<sequence length="239" mass="27567">MIENQSDNIDIKENDVLNQDNAPEDNSSAAEKTIENDELSPQKTEEINTEELKNTISNNDARLEQLEKEHETLKNQYVRISADFDNFRKRQSRDQDDLKVQLVSKTLTAILPIVDNFERARQQLKPESEEAQALHRSYQGLYKQLVEVLKQQGVSPMRVVGQQFDPNLHEAVLREPSEEFKEDLIVEELQRGYHLEGKVLRHALVKVSMGHGQQNSQEEVEKDTVEEDIDSEENTSEDV</sequence>
<organism>
    <name type="scientific">Prochlorococcus marinus (strain MIT 9312)</name>
    <dbReference type="NCBI Taxonomy" id="74546"/>
    <lineage>
        <taxon>Bacteria</taxon>
        <taxon>Bacillati</taxon>
        <taxon>Cyanobacteriota</taxon>
        <taxon>Cyanophyceae</taxon>
        <taxon>Synechococcales</taxon>
        <taxon>Prochlorococcaceae</taxon>
        <taxon>Prochlorococcus</taxon>
    </lineage>
</organism>
<protein>
    <recommendedName>
        <fullName evidence="1">Protein GrpE</fullName>
    </recommendedName>
    <alternativeName>
        <fullName evidence="1">HSP-70 cofactor</fullName>
    </alternativeName>
</protein>
<accession>Q31DG8</accession>
<evidence type="ECO:0000255" key="1">
    <source>
        <dbReference type="HAMAP-Rule" id="MF_01151"/>
    </source>
</evidence>
<evidence type="ECO:0000256" key="2">
    <source>
        <dbReference type="SAM" id="MobiDB-lite"/>
    </source>
</evidence>
<name>GRPE_PROM9</name>